<gene>
    <name evidence="1" type="primary">rnhA</name>
    <name type="ordered locus">BOV_0482</name>
</gene>
<evidence type="ECO:0000255" key="1">
    <source>
        <dbReference type="HAMAP-Rule" id="MF_00042"/>
    </source>
</evidence>
<evidence type="ECO:0000255" key="2">
    <source>
        <dbReference type="PROSITE-ProRule" id="PRU00408"/>
    </source>
</evidence>
<organism>
    <name type="scientific">Brucella ovis (strain ATCC 25840 / 63/290 / NCTC 10512)</name>
    <dbReference type="NCBI Taxonomy" id="444178"/>
    <lineage>
        <taxon>Bacteria</taxon>
        <taxon>Pseudomonadati</taxon>
        <taxon>Pseudomonadota</taxon>
        <taxon>Alphaproteobacteria</taxon>
        <taxon>Hyphomicrobiales</taxon>
        <taxon>Brucellaceae</taxon>
        <taxon>Brucella/Ochrobactrum group</taxon>
        <taxon>Brucella</taxon>
    </lineage>
</organism>
<accession>A5VP47</accession>
<dbReference type="EC" id="3.1.26.4" evidence="1"/>
<dbReference type="EMBL" id="CP000708">
    <property type="protein sequence ID" value="ABQ61094.1"/>
    <property type="molecule type" value="Genomic_DNA"/>
</dbReference>
<dbReference type="RefSeq" id="WP_002963635.1">
    <property type="nucleotide sequence ID" value="NC_009505.1"/>
</dbReference>
<dbReference type="SMR" id="A5VP47"/>
<dbReference type="GeneID" id="97534154"/>
<dbReference type="KEGG" id="bov:BOV_0482"/>
<dbReference type="HOGENOM" id="CLU_030894_6_0_5"/>
<dbReference type="PhylomeDB" id="A5VP47"/>
<dbReference type="Proteomes" id="UP000006383">
    <property type="component" value="Chromosome I"/>
</dbReference>
<dbReference type="GO" id="GO:0005737">
    <property type="term" value="C:cytoplasm"/>
    <property type="evidence" value="ECO:0007669"/>
    <property type="project" value="UniProtKB-SubCell"/>
</dbReference>
<dbReference type="GO" id="GO:0000287">
    <property type="term" value="F:magnesium ion binding"/>
    <property type="evidence" value="ECO:0007669"/>
    <property type="project" value="UniProtKB-UniRule"/>
</dbReference>
<dbReference type="GO" id="GO:0003676">
    <property type="term" value="F:nucleic acid binding"/>
    <property type="evidence" value="ECO:0007669"/>
    <property type="project" value="InterPro"/>
</dbReference>
<dbReference type="GO" id="GO:0004523">
    <property type="term" value="F:RNA-DNA hybrid ribonuclease activity"/>
    <property type="evidence" value="ECO:0007669"/>
    <property type="project" value="UniProtKB-UniRule"/>
</dbReference>
<dbReference type="GO" id="GO:0043137">
    <property type="term" value="P:DNA replication, removal of RNA primer"/>
    <property type="evidence" value="ECO:0007669"/>
    <property type="project" value="TreeGrafter"/>
</dbReference>
<dbReference type="CDD" id="cd09278">
    <property type="entry name" value="RNase_HI_prokaryote_like"/>
    <property type="match status" value="1"/>
</dbReference>
<dbReference type="FunFam" id="3.30.420.10:FF:000089">
    <property type="entry name" value="Ribonuclease H"/>
    <property type="match status" value="1"/>
</dbReference>
<dbReference type="Gene3D" id="3.30.420.10">
    <property type="entry name" value="Ribonuclease H-like superfamily/Ribonuclease H"/>
    <property type="match status" value="1"/>
</dbReference>
<dbReference type="HAMAP" id="MF_00042">
    <property type="entry name" value="RNase_H"/>
    <property type="match status" value="1"/>
</dbReference>
<dbReference type="InterPro" id="IPR050092">
    <property type="entry name" value="RNase_H"/>
</dbReference>
<dbReference type="InterPro" id="IPR012337">
    <property type="entry name" value="RNaseH-like_sf"/>
</dbReference>
<dbReference type="InterPro" id="IPR002156">
    <property type="entry name" value="RNaseH_domain"/>
</dbReference>
<dbReference type="InterPro" id="IPR036397">
    <property type="entry name" value="RNaseH_sf"/>
</dbReference>
<dbReference type="InterPro" id="IPR022892">
    <property type="entry name" value="RNaseHI"/>
</dbReference>
<dbReference type="NCBIfam" id="NF001236">
    <property type="entry name" value="PRK00203.1"/>
    <property type="match status" value="1"/>
</dbReference>
<dbReference type="PANTHER" id="PTHR10642">
    <property type="entry name" value="RIBONUCLEASE H1"/>
    <property type="match status" value="1"/>
</dbReference>
<dbReference type="PANTHER" id="PTHR10642:SF26">
    <property type="entry name" value="RIBONUCLEASE H1"/>
    <property type="match status" value="1"/>
</dbReference>
<dbReference type="Pfam" id="PF00075">
    <property type="entry name" value="RNase_H"/>
    <property type="match status" value="1"/>
</dbReference>
<dbReference type="SUPFAM" id="SSF53098">
    <property type="entry name" value="Ribonuclease H-like"/>
    <property type="match status" value="1"/>
</dbReference>
<dbReference type="PROSITE" id="PS50879">
    <property type="entry name" value="RNASE_H_1"/>
    <property type="match status" value="1"/>
</dbReference>
<feature type="chain" id="PRO_0000332568" description="Ribonuclease H">
    <location>
        <begin position="1"/>
        <end position="154"/>
    </location>
</feature>
<feature type="domain" description="RNase H type-1" evidence="2">
    <location>
        <begin position="1"/>
        <end position="141"/>
    </location>
</feature>
<feature type="binding site" evidence="1">
    <location>
        <position position="9"/>
    </location>
    <ligand>
        <name>Mg(2+)</name>
        <dbReference type="ChEBI" id="CHEBI:18420"/>
        <label>1</label>
    </ligand>
</feature>
<feature type="binding site" evidence="1">
    <location>
        <position position="9"/>
    </location>
    <ligand>
        <name>Mg(2+)</name>
        <dbReference type="ChEBI" id="CHEBI:18420"/>
        <label>2</label>
    </ligand>
</feature>
<feature type="binding site" evidence="1">
    <location>
        <position position="47"/>
    </location>
    <ligand>
        <name>Mg(2+)</name>
        <dbReference type="ChEBI" id="CHEBI:18420"/>
        <label>1</label>
    </ligand>
</feature>
<feature type="binding site" evidence="1">
    <location>
        <position position="69"/>
    </location>
    <ligand>
        <name>Mg(2+)</name>
        <dbReference type="ChEBI" id="CHEBI:18420"/>
        <label>1</label>
    </ligand>
</feature>
<feature type="binding site" evidence="1">
    <location>
        <position position="133"/>
    </location>
    <ligand>
        <name>Mg(2+)</name>
        <dbReference type="ChEBI" id="CHEBI:18420"/>
        <label>2</label>
    </ligand>
</feature>
<proteinExistence type="inferred from homology"/>
<protein>
    <recommendedName>
        <fullName evidence="1">Ribonuclease H</fullName>
        <shortName evidence="1">RNase H</shortName>
        <ecNumber evidence="1">3.1.26.4</ecNumber>
    </recommendedName>
</protein>
<reference key="1">
    <citation type="journal article" date="2009" name="PLoS ONE">
        <title>Genome degradation in Brucella ovis corresponds with narrowing of its host range and tissue tropism.</title>
        <authorList>
            <person name="Tsolis R.M."/>
            <person name="Seshadri R."/>
            <person name="Santos R.L."/>
            <person name="Sangari F.J."/>
            <person name="Lobo J.M."/>
            <person name="de Jong M.F."/>
            <person name="Ren Q."/>
            <person name="Myers G."/>
            <person name="Brinkac L.M."/>
            <person name="Nelson W.C."/>
            <person name="Deboy R.T."/>
            <person name="Angiuoli S."/>
            <person name="Khouri H."/>
            <person name="Dimitrov G."/>
            <person name="Robinson J.R."/>
            <person name="Mulligan S."/>
            <person name="Walker R.L."/>
            <person name="Elzer P.E."/>
            <person name="Hassan K.A."/>
            <person name="Paulsen I.T."/>
        </authorList>
    </citation>
    <scope>NUCLEOTIDE SEQUENCE [LARGE SCALE GENOMIC DNA]</scope>
    <source>
        <strain>ATCC 25840 / 63/290 / NCTC 10512</strain>
    </source>
</reference>
<keyword id="KW-0963">Cytoplasm</keyword>
<keyword id="KW-0255">Endonuclease</keyword>
<keyword id="KW-0378">Hydrolase</keyword>
<keyword id="KW-0460">Magnesium</keyword>
<keyword id="KW-0479">Metal-binding</keyword>
<keyword id="KW-0540">Nuclease</keyword>
<sequence>MKRIEAYTDGACSGNPGPGGWGALLRWNGNEKELKGGEAETTNNRMELMAAISALSALKEPCEVDLYTDSVYVRDGISGWIEGWKRNGWKTAAKKPVKNAELWQALDEARKAHKVTWHWIKGHAGHPENERADELARAGMEPFKYAGHRTLKVK</sequence>
<name>RNH_BRUO2</name>
<comment type="function">
    <text evidence="1">Endonuclease that specifically degrades the RNA of RNA-DNA hybrids.</text>
</comment>
<comment type="catalytic activity">
    <reaction evidence="1">
        <text>Endonucleolytic cleavage to 5'-phosphomonoester.</text>
        <dbReference type="EC" id="3.1.26.4"/>
    </reaction>
</comment>
<comment type="cofactor">
    <cofactor evidence="1">
        <name>Mg(2+)</name>
        <dbReference type="ChEBI" id="CHEBI:18420"/>
    </cofactor>
    <text evidence="1">Binds 1 Mg(2+) ion per subunit. May bind a second metal ion at a regulatory site, or after substrate binding.</text>
</comment>
<comment type="subunit">
    <text evidence="1">Monomer.</text>
</comment>
<comment type="subcellular location">
    <subcellularLocation>
        <location evidence="1">Cytoplasm</location>
    </subcellularLocation>
</comment>
<comment type="similarity">
    <text evidence="1">Belongs to the RNase H family.</text>
</comment>